<sequence>MIDIKVLRENPELMKENIVLRNLDPNKYDVDYILELDAKRRSLQKELDTLKAQRNKISQEIGKRKGEEREELIKKAKTLKEKIEELEKEYEKIEKELYLKLWQLPNFLSPKAPKGKDEKDNIEIKRWGNIKTFTFTPKDHLDLALLNDLVDFERGSKVTGSNFYYLKNEAVLLEFALFRLVIDTLLPEGFKLFITPDLARMEIIDGIGFQPRGPEAQIYRVEDTDLGLIATAEITLGGYHKDEILDELDLPLKYLGFSHCFRTEAGAYGRYNRGLYRVHQFSKAEIFIICRPEDSEEMHEYILSLEEKIFQKLEIPYRVVDICSGDLGAPAARKFDIEAWMPGRGDFGEVTSCSNCTDYQARRLNIRFRRVTGEVEYVHMLNGTAIAISRALIAILENYQQEDGSILIPKVLQPYIGISEIKPKK</sequence>
<organism>
    <name type="scientific">Dictyoglomus thermophilum (strain ATCC 35947 / DSM 3960 / H-6-12)</name>
    <dbReference type="NCBI Taxonomy" id="309799"/>
    <lineage>
        <taxon>Bacteria</taxon>
        <taxon>Pseudomonadati</taxon>
        <taxon>Dictyoglomota</taxon>
        <taxon>Dictyoglomia</taxon>
        <taxon>Dictyoglomales</taxon>
        <taxon>Dictyoglomaceae</taxon>
        <taxon>Dictyoglomus</taxon>
    </lineage>
</organism>
<proteinExistence type="inferred from homology"/>
<name>SYS_DICT6</name>
<protein>
    <recommendedName>
        <fullName evidence="1">Serine--tRNA ligase</fullName>
        <ecNumber evidence="1">6.1.1.11</ecNumber>
    </recommendedName>
    <alternativeName>
        <fullName evidence="1">Seryl-tRNA synthetase</fullName>
        <shortName evidence="1">SerRS</shortName>
    </alternativeName>
    <alternativeName>
        <fullName evidence="1">Seryl-tRNA(Ser/Sec) synthetase</fullName>
    </alternativeName>
</protein>
<reference key="1">
    <citation type="journal article" date="2014" name="Genome Announc.">
        <title>Complete Genome Sequence of the Extreme Thermophile Dictyoglomus thermophilum H-6-12.</title>
        <authorList>
            <person name="Coil D.A."/>
            <person name="Badger J.H."/>
            <person name="Forberger H.C."/>
            <person name="Riggs F."/>
            <person name="Madupu R."/>
            <person name="Fedorova N."/>
            <person name="Ward N."/>
            <person name="Robb F.T."/>
            <person name="Eisen J.A."/>
        </authorList>
    </citation>
    <scope>NUCLEOTIDE SEQUENCE [LARGE SCALE GENOMIC DNA]</scope>
    <source>
        <strain>ATCC 35947 / DSM 3960 / H-6-12</strain>
    </source>
</reference>
<dbReference type="EC" id="6.1.1.11" evidence="1"/>
<dbReference type="EMBL" id="CP001146">
    <property type="protein sequence ID" value="ACI19764.1"/>
    <property type="molecule type" value="Genomic_DNA"/>
</dbReference>
<dbReference type="RefSeq" id="WP_012548396.1">
    <property type="nucleotide sequence ID" value="NC_011297.1"/>
</dbReference>
<dbReference type="SMR" id="B5YEY8"/>
<dbReference type="STRING" id="309799.DICTH_1273"/>
<dbReference type="PaxDb" id="309799-DICTH_1273"/>
<dbReference type="KEGG" id="dth:DICTH_1273"/>
<dbReference type="eggNOG" id="COG0172">
    <property type="taxonomic scope" value="Bacteria"/>
</dbReference>
<dbReference type="HOGENOM" id="CLU_023797_0_1_0"/>
<dbReference type="OrthoDB" id="9804647at2"/>
<dbReference type="UniPathway" id="UPA00906">
    <property type="reaction ID" value="UER00895"/>
</dbReference>
<dbReference type="Proteomes" id="UP000001733">
    <property type="component" value="Chromosome"/>
</dbReference>
<dbReference type="GO" id="GO:0005737">
    <property type="term" value="C:cytoplasm"/>
    <property type="evidence" value="ECO:0007669"/>
    <property type="project" value="UniProtKB-SubCell"/>
</dbReference>
<dbReference type="GO" id="GO:0005524">
    <property type="term" value="F:ATP binding"/>
    <property type="evidence" value="ECO:0007669"/>
    <property type="project" value="UniProtKB-UniRule"/>
</dbReference>
<dbReference type="GO" id="GO:0004828">
    <property type="term" value="F:serine-tRNA ligase activity"/>
    <property type="evidence" value="ECO:0007669"/>
    <property type="project" value="UniProtKB-UniRule"/>
</dbReference>
<dbReference type="GO" id="GO:0016260">
    <property type="term" value="P:selenocysteine biosynthetic process"/>
    <property type="evidence" value="ECO:0007669"/>
    <property type="project" value="UniProtKB-UniRule"/>
</dbReference>
<dbReference type="GO" id="GO:0006434">
    <property type="term" value="P:seryl-tRNA aminoacylation"/>
    <property type="evidence" value="ECO:0007669"/>
    <property type="project" value="UniProtKB-UniRule"/>
</dbReference>
<dbReference type="CDD" id="cd00770">
    <property type="entry name" value="SerRS_core"/>
    <property type="match status" value="1"/>
</dbReference>
<dbReference type="FunFam" id="1.10.287.40:FF:000004">
    <property type="entry name" value="Serine--tRNA ligase"/>
    <property type="match status" value="1"/>
</dbReference>
<dbReference type="FunFam" id="3.30.930.10:FF:000055">
    <property type="entry name" value="Serine--tRNA ligase"/>
    <property type="match status" value="1"/>
</dbReference>
<dbReference type="Gene3D" id="3.30.930.10">
    <property type="entry name" value="Bira Bifunctional Protein, Domain 2"/>
    <property type="match status" value="1"/>
</dbReference>
<dbReference type="Gene3D" id="1.10.287.40">
    <property type="entry name" value="Serine-tRNA synthetase, tRNA binding domain"/>
    <property type="match status" value="1"/>
</dbReference>
<dbReference type="HAMAP" id="MF_00176">
    <property type="entry name" value="Ser_tRNA_synth_type1"/>
    <property type="match status" value="1"/>
</dbReference>
<dbReference type="InterPro" id="IPR002314">
    <property type="entry name" value="aa-tRNA-synt_IIb"/>
</dbReference>
<dbReference type="InterPro" id="IPR006195">
    <property type="entry name" value="aa-tRNA-synth_II"/>
</dbReference>
<dbReference type="InterPro" id="IPR045864">
    <property type="entry name" value="aa-tRNA-synth_II/BPL/LPL"/>
</dbReference>
<dbReference type="InterPro" id="IPR002317">
    <property type="entry name" value="Ser-tRNA-ligase_type_1"/>
</dbReference>
<dbReference type="InterPro" id="IPR015866">
    <property type="entry name" value="Ser-tRNA-synth_1_N"/>
</dbReference>
<dbReference type="InterPro" id="IPR042103">
    <property type="entry name" value="SerRS_1_N_sf"/>
</dbReference>
<dbReference type="InterPro" id="IPR033729">
    <property type="entry name" value="SerRS_core"/>
</dbReference>
<dbReference type="InterPro" id="IPR010978">
    <property type="entry name" value="tRNA-bd_arm"/>
</dbReference>
<dbReference type="NCBIfam" id="TIGR00414">
    <property type="entry name" value="serS"/>
    <property type="match status" value="1"/>
</dbReference>
<dbReference type="PANTHER" id="PTHR11778">
    <property type="entry name" value="SERYL-TRNA SYNTHETASE"/>
    <property type="match status" value="1"/>
</dbReference>
<dbReference type="Pfam" id="PF02403">
    <property type="entry name" value="Seryl_tRNA_N"/>
    <property type="match status" value="1"/>
</dbReference>
<dbReference type="Pfam" id="PF00587">
    <property type="entry name" value="tRNA-synt_2b"/>
    <property type="match status" value="1"/>
</dbReference>
<dbReference type="PIRSF" id="PIRSF001529">
    <property type="entry name" value="Ser-tRNA-synth_IIa"/>
    <property type="match status" value="1"/>
</dbReference>
<dbReference type="PRINTS" id="PR00981">
    <property type="entry name" value="TRNASYNTHSER"/>
</dbReference>
<dbReference type="SUPFAM" id="SSF55681">
    <property type="entry name" value="Class II aaRS and biotin synthetases"/>
    <property type="match status" value="1"/>
</dbReference>
<dbReference type="SUPFAM" id="SSF46589">
    <property type="entry name" value="tRNA-binding arm"/>
    <property type="match status" value="1"/>
</dbReference>
<dbReference type="PROSITE" id="PS50862">
    <property type="entry name" value="AA_TRNA_LIGASE_II"/>
    <property type="match status" value="1"/>
</dbReference>
<accession>B5YEY8</accession>
<keyword id="KW-0030">Aminoacyl-tRNA synthetase</keyword>
<keyword id="KW-0067">ATP-binding</keyword>
<keyword id="KW-0963">Cytoplasm</keyword>
<keyword id="KW-0436">Ligase</keyword>
<keyword id="KW-0547">Nucleotide-binding</keyword>
<keyword id="KW-0648">Protein biosynthesis</keyword>
<comment type="function">
    <text evidence="1">Catalyzes the attachment of serine to tRNA(Ser). Is also able to aminoacylate tRNA(Sec) with serine, to form the misacylated tRNA L-seryl-tRNA(Sec), which will be further converted into selenocysteinyl-tRNA(Sec).</text>
</comment>
<comment type="catalytic activity">
    <reaction evidence="1">
        <text>tRNA(Ser) + L-serine + ATP = L-seryl-tRNA(Ser) + AMP + diphosphate + H(+)</text>
        <dbReference type="Rhea" id="RHEA:12292"/>
        <dbReference type="Rhea" id="RHEA-COMP:9669"/>
        <dbReference type="Rhea" id="RHEA-COMP:9703"/>
        <dbReference type="ChEBI" id="CHEBI:15378"/>
        <dbReference type="ChEBI" id="CHEBI:30616"/>
        <dbReference type="ChEBI" id="CHEBI:33019"/>
        <dbReference type="ChEBI" id="CHEBI:33384"/>
        <dbReference type="ChEBI" id="CHEBI:78442"/>
        <dbReference type="ChEBI" id="CHEBI:78533"/>
        <dbReference type="ChEBI" id="CHEBI:456215"/>
        <dbReference type="EC" id="6.1.1.11"/>
    </reaction>
</comment>
<comment type="catalytic activity">
    <reaction evidence="1">
        <text>tRNA(Sec) + L-serine + ATP = L-seryl-tRNA(Sec) + AMP + diphosphate + H(+)</text>
        <dbReference type="Rhea" id="RHEA:42580"/>
        <dbReference type="Rhea" id="RHEA-COMP:9742"/>
        <dbReference type="Rhea" id="RHEA-COMP:10128"/>
        <dbReference type="ChEBI" id="CHEBI:15378"/>
        <dbReference type="ChEBI" id="CHEBI:30616"/>
        <dbReference type="ChEBI" id="CHEBI:33019"/>
        <dbReference type="ChEBI" id="CHEBI:33384"/>
        <dbReference type="ChEBI" id="CHEBI:78442"/>
        <dbReference type="ChEBI" id="CHEBI:78533"/>
        <dbReference type="ChEBI" id="CHEBI:456215"/>
        <dbReference type="EC" id="6.1.1.11"/>
    </reaction>
</comment>
<comment type="pathway">
    <text evidence="1">Aminoacyl-tRNA biosynthesis; selenocysteinyl-tRNA(Sec) biosynthesis; L-seryl-tRNA(Sec) from L-serine and tRNA(Sec): step 1/1.</text>
</comment>
<comment type="subunit">
    <text evidence="1">Homodimer. The tRNA molecule binds across the dimer.</text>
</comment>
<comment type="subcellular location">
    <subcellularLocation>
        <location evidence="1">Cytoplasm</location>
    </subcellularLocation>
</comment>
<comment type="domain">
    <text evidence="1">Consists of two distinct domains, a catalytic core and a N-terminal extension that is involved in tRNA binding.</text>
</comment>
<comment type="similarity">
    <text evidence="1">Belongs to the class-II aminoacyl-tRNA synthetase family. Type-1 seryl-tRNA synthetase subfamily.</text>
</comment>
<feature type="chain" id="PRO_1000098062" description="Serine--tRNA ligase">
    <location>
        <begin position="1"/>
        <end position="425"/>
    </location>
</feature>
<feature type="binding site" evidence="1">
    <location>
        <begin position="231"/>
        <end position="233"/>
    </location>
    <ligand>
        <name>L-serine</name>
        <dbReference type="ChEBI" id="CHEBI:33384"/>
    </ligand>
</feature>
<feature type="binding site" evidence="1">
    <location>
        <begin position="262"/>
        <end position="264"/>
    </location>
    <ligand>
        <name>ATP</name>
        <dbReference type="ChEBI" id="CHEBI:30616"/>
    </ligand>
</feature>
<feature type="binding site" evidence="1">
    <location>
        <position position="278"/>
    </location>
    <ligand>
        <name>ATP</name>
        <dbReference type="ChEBI" id="CHEBI:30616"/>
    </ligand>
</feature>
<feature type="binding site" evidence="1">
    <location>
        <position position="285"/>
    </location>
    <ligand>
        <name>L-serine</name>
        <dbReference type="ChEBI" id="CHEBI:33384"/>
    </ligand>
</feature>
<feature type="binding site" evidence="1">
    <location>
        <begin position="349"/>
        <end position="352"/>
    </location>
    <ligand>
        <name>ATP</name>
        <dbReference type="ChEBI" id="CHEBI:30616"/>
    </ligand>
</feature>
<feature type="binding site" evidence="1">
    <location>
        <position position="384"/>
    </location>
    <ligand>
        <name>L-serine</name>
        <dbReference type="ChEBI" id="CHEBI:33384"/>
    </ligand>
</feature>
<gene>
    <name evidence="1" type="primary">serS</name>
    <name type="ordered locus">DICTH_1273</name>
</gene>
<evidence type="ECO:0000255" key="1">
    <source>
        <dbReference type="HAMAP-Rule" id="MF_00176"/>
    </source>
</evidence>